<dbReference type="EC" id="6.3.4.16" evidence="1"/>
<dbReference type="EC" id="6.3.5.5" evidence="1"/>
<dbReference type="EMBL" id="BA000022">
    <property type="protein sequence ID" value="BAA10403.1"/>
    <property type="status" value="ALT_INIT"/>
    <property type="molecule type" value="Genomic_DNA"/>
</dbReference>
<dbReference type="PIR" id="S76557">
    <property type="entry name" value="S76557"/>
</dbReference>
<dbReference type="SMR" id="Q55756"/>
<dbReference type="FunCoup" id="Q55756">
    <property type="interactions" value="445"/>
</dbReference>
<dbReference type="IntAct" id="Q55756">
    <property type="interactions" value="2"/>
</dbReference>
<dbReference type="STRING" id="1148.gene:10499904"/>
<dbReference type="PaxDb" id="1148-1001668"/>
<dbReference type="EnsemblBacteria" id="BAA10403">
    <property type="protein sequence ID" value="BAA10403"/>
    <property type="gene ID" value="BAA10403"/>
</dbReference>
<dbReference type="KEGG" id="syn:sll0370"/>
<dbReference type="eggNOG" id="COG0458">
    <property type="taxonomic scope" value="Bacteria"/>
</dbReference>
<dbReference type="InParanoid" id="Q55756"/>
<dbReference type="PhylomeDB" id="Q55756"/>
<dbReference type="UniPathway" id="UPA00068">
    <property type="reaction ID" value="UER00171"/>
</dbReference>
<dbReference type="UniPathway" id="UPA00070">
    <property type="reaction ID" value="UER00115"/>
</dbReference>
<dbReference type="Proteomes" id="UP000001425">
    <property type="component" value="Chromosome"/>
</dbReference>
<dbReference type="GO" id="GO:0005737">
    <property type="term" value="C:cytoplasm"/>
    <property type="evidence" value="ECO:0000318"/>
    <property type="project" value="GO_Central"/>
</dbReference>
<dbReference type="GO" id="GO:0005524">
    <property type="term" value="F:ATP binding"/>
    <property type="evidence" value="ECO:0007669"/>
    <property type="project" value="UniProtKB-UniRule"/>
</dbReference>
<dbReference type="GO" id="GO:0004087">
    <property type="term" value="F:carbamoyl-phosphate synthase (ammonia) activity"/>
    <property type="evidence" value="ECO:0000318"/>
    <property type="project" value="GO_Central"/>
</dbReference>
<dbReference type="GO" id="GO:0004088">
    <property type="term" value="F:carbamoyl-phosphate synthase (glutamine-hydrolyzing) activity"/>
    <property type="evidence" value="ECO:0007669"/>
    <property type="project" value="UniProtKB-UniRule"/>
</dbReference>
<dbReference type="GO" id="GO:0046872">
    <property type="term" value="F:metal ion binding"/>
    <property type="evidence" value="ECO:0007669"/>
    <property type="project" value="UniProtKB-KW"/>
</dbReference>
<dbReference type="GO" id="GO:0044205">
    <property type="term" value="P:'de novo' UMP biosynthetic process"/>
    <property type="evidence" value="ECO:0007669"/>
    <property type="project" value="UniProtKB-UniRule"/>
</dbReference>
<dbReference type="GO" id="GO:0006541">
    <property type="term" value="P:glutamine metabolic process"/>
    <property type="evidence" value="ECO:0000318"/>
    <property type="project" value="GO_Central"/>
</dbReference>
<dbReference type="GO" id="GO:0006526">
    <property type="term" value="P:L-arginine biosynthetic process"/>
    <property type="evidence" value="ECO:0007669"/>
    <property type="project" value="UniProtKB-UniRule"/>
</dbReference>
<dbReference type="CDD" id="cd01424">
    <property type="entry name" value="MGS_CPS_II"/>
    <property type="match status" value="1"/>
</dbReference>
<dbReference type="FunFam" id="1.10.1030.10:FF:000002">
    <property type="entry name" value="Carbamoyl-phosphate synthase large chain"/>
    <property type="match status" value="1"/>
</dbReference>
<dbReference type="FunFam" id="3.30.1490.20:FF:000001">
    <property type="entry name" value="Carbamoyl-phosphate synthase large chain"/>
    <property type="match status" value="1"/>
</dbReference>
<dbReference type="FunFam" id="3.30.470.20:FF:000007">
    <property type="entry name" value="Carbamoyl-phosphate synthase large chain"/>
    <property type="match status" value="1"/>
</dbReference>
<dbReference type="FunFam" id="3.30.470.20:FF:000013">
    <property type="entry name" value="Carbamoyl-phosphate synthase large chain"/>
    <property type="match status" value="1"/>
</dbReference>
<dbReference type="FunFam" id="3.40.50.1380:FF:000013">
    <property type="entry name" value="Carbamoyl-phosphate synthase large chain"/>
    <property type="match status" value="1"/>
</dbReference>
<dbReference type="FunFam" id="3.40.50.20:FF:000001">
    <property type="entry name" value="Carbamoyl-phosphate synthase large chain"/>
    <property type="match status" value="1"/>
</dbReference>
<dbReference type="FunFam" id="3.40.50.20:FF:000003">
    <property type="entry name" value="Carbamoyl-phosphate synthase large chain"/>
    <property type="match status" value="1"/>
</dbReference>
<dbReference type="Gene3D" id="3.40.50.20">
    <property type="match status" value="2"/>
</dbReference>
<dbReference type="Gene3D" id="3.30.470.20">
    <property type="entry name" value="ATP-grasp fold, B domain"/>
    <property type="match status" value="2"/>
</dbReference>
<dbReference type="Gene3D" id="1.10.1030.10">
    <property type="entry name" value="Carbamoyl-phosphate synthetase, large subunit oligomerisation domain"/>
    <property type="match status" value="1"/>
</dbReference>
<dbReference type="Gene3D" id="3.40.50.1380">
    <property type="entry name" value="Methylglyoxal synthase-like domain"/>
    <property type="match status" value="1"/>
</dbReference>
<dbReference type="HAMAP" id="MF_01210_A">
    <property type="entry name" value="CPSase_L_chain_A"/>
    <property type="match status" value="1"/>
</dbReference>
<dbReference type="HAMAP" id="MF_01210_B">
    <property type="entry name" value="CPSase_L_chain_B"/>
    <property type="match status" value="1"/>
</dbReference>
<dbReference type="InterPro" id="IPR011761">
    <property type="entry name" value="ATP-grasp"/>
</dbReference>
<dbReference type="InterPro" id="IPR006275">
    <property type="entry name" value="CarbamoylP_synth_lsu"/>
</dbReference>
<dbReference type="InterPro" id="IPR005480">
    <property type="entry name" value="CarbamoylP_synth_lsu_oligo"/>
</dbReference>
<dbReference type="InterPro" id="IPR036897">
    <property type="entry name" value="CarbamoylP_synth_lsu_oligo_sf"/>
</dbReference>
<dbReference type="InterPro" id="IPR005479">
    <property type="entry name" value="CbamoylP_synth_lsu-like_ATP-bd"/>
</dbReference>
<dbReference type="InterPro" id="IPR005483">
    <property type="entry name" value="CbamoylP_synth_lsu_CPSase_dom"/>
</dbReference>
<dbReference type="InterPro" id="IPR011607">
    <property type="entry name" value="MGS-like_dom"/>
</dbReference>
<dbReference type="InterPro" id="IPR036914">
    <property type="entry name" value="MGS-like_dom_sf"/>
</dbReference>
<dbReference type="InterPro" id="IPR033937">
    <property type="entry name" value="MGS_CPS_CarB"/>
</dbReference>
<dbReference type="InterPro" id="IPR016185">
    <property type="entry name" value="PreATP-grasp_dom_sf"/>
</dbReference>
<dbReference type="NCBIfam" id="TIGR01369">
    <property type="entry name" value="CPSaseII_lrg"/>
    <property type="match status" value="1"/>
</dbReference>
<dbReference type="NCBIfam" id="NF003671">
    <property type="entry name" value="PRK05294.1"/>
    <property type="match status" value="1"/>
</dbReference>
<dbReference type="NCBIfam" id="NF009455">
    <property type="entry name" value="PRK12815.1"/>
    <property type="match status" value="1"/>
</dbReference>
<dbReference type="PANTHER" id="PTHR11405:SF53">
    <property type="entry name" value="CARBAMOYL-PHOSPHATE SYNTHASE [AMMONIA], MITOCHONDRIAL"/>
    <property type="match status" value="1"/>
</dbReference>
<dbReference type="PANTHER" id="PTHR11405">
    <property type="entry name" value="CARBAMOYLTRANSFERASE FAMILY MEMBER"/>
    <property type="match status" value="1"/>
</dbReference>
<dbReference type="Pfam" id="PF02786">
    <property type="entry name" value="CPSase_L_D2"/>
    <property type="match status" value="2"/>
</dbReference>
<dbReference type="Pfam" id="PF02787">
    <property type="entry name" value="CPSase_L_D3"/>
    <property type="match status" value="1"/>
</dbReference>
<dbReference type="Pfam" id="PF02142">
    <property type="entry name" value="MGS"/>
    <property type="match status" value="1"/>
</dbReference>
<dbReference type="PRINTS" id="PR00098">
    <property type="entry name" value="CPSASE"/>
</dbReference>
<dbReference type="SMART" id="SM01096">
    <property type="entry name" value="CPSase_L_D3"/>
    <property type="match status" value="1"/>
</dbReference>
<dbReference type="SMART" id="SM00851">
    <property type="entry name" value="MGS"/>
    <property type="match status" value="1"/>
</dbReference>
<dbReference type="SUPFAM" id="SSF48108">
    <property type="entry name" value="Carbamoyl phosphate synthetase, large subunit connection domain"/>
    <property type="match status" value="1"/>
</dbReference>
<dbReference type="SUPFAM" id="SSF56059">
    <property type="entry name" value="Glutathione synthetase ATP-binding domain-like"/>
    <property type="match status" value="2"/>
</dbReference>
<dbReference type="SUPFAM" id="SSF52335">
    <property type="entry name" value="Methylglyoxal synthase-like"/>
    <property type="match status" value="1"/>
</dbReference>
<dbReference type="SUPFAM" id="SSF52440">
    <property type="entry name" value="PreATP-grasp domain"/>
    <property type="match status" value="2"/>
</dbReference>
<dbReference type="PROSITE" id="PS50975">
    <property type="entry name" value="ATP_GRASP"/>
    <property type="match status" value="2"/>
</dbReference>
<dbReference type="PROSITE" id="PS00866">
    <property type="entry name" value="CPSASE_1"/>
    <property type="match status" value="1"/>
</dbReference>
<dbReference type="PROSITE" id="PS00867">
    <property type="entry name" value="CPSASE_2"/>
    <property type="match status" value="2"/>
</dbReference>
<dbReference type="PROSITE" id="PS51855">
    <property type="entry name" value="MGS"/>
    <property type="match status" value="1"/>
</dbReference>
<gene>
    <name evidence="1" type="primary">carB</name>
    <name type="ordered locus">sll0370</name>
</gene>
<evidence type="ECO:0000255" key="1">
    <source>
        <dbReference type="HAMAP-Rule" id="MF_01210"/>
    </source>
</evidence>
<evidence type="ECO:0000305" key="2"/>
<organism>
    <name type="scientific">Synechocystis sp. (strain ATCC 27184 / PCC 6803 / Kazusa)</name>
    <dbReference type="NCBI Taxonomy" id="1111708"/>
    <lineage>
        <taxon>Bacteria</taxon>
        <taxon>Bacillati</taxon>
        <taxon>Cyanobacteriota</taxon>
        <taxon>Cyanophyceae</taxon>
        <taxon>Synechococcales</taxon>
        <taxon>Merismopediaceae</taxon>
        <taxon>Synechocystis</taxon>
    </lineage>
</organism>
<comment type="function">
    <text evidence="1">Large subunit of the glutamine-dependent carbamoyl phosphate synthetase (CPSase). CPSase catalyzes the formation of carbamoyl phosphate from the ammonia moiety of glutamine, carbonate, and phosphate donated by ATP, constituting the first step of 2 biosynthetic pathways, one leading to arginine and/or urea and the other to pyrimidine nucleotides. The large subunit (synthetase) binds the substrates ammonia (free or transferred from glutamine from the small subunit), hydrogencarbonate and ATP and carries out an ATP-coupled ligase reaction, activating hydrogencarbonate by forming carboxy phosphate which reacts with ammonia to form carbamoyl phosphate.</text>
</comment>
<comment type="catalytic activity">
    <reaction evidence="1">
        <text>hydrogencarbonate + L-glutamine + 2 ATP + H2O = carbamoyl phosphate + L-glutamate + 2 ADP + phosphate + 2 H(+)</text>
        <dbReference type="Rhea" id="RHEA:18633"/>
        <dbReference type="ChEBI" id="CHEBI:15377"/>
        <dbReference type="ChEBI" id="CHEBI:15378"/>
        <dbReference type="ChEBI" id="CHEBI:17544"/>
        <dbReference type="ChEBI" id="CHEBI:29985"/>
        <dbReference type="ChEBI" id="CHEBI:30616"/>
        <dbReference type="ChEBI" id="CHEBI:43474"/>
        <dbReference type="ChEBI" id="CHEBI:58228"/>
        <dbReference type="ChEBI" id="CHEBI:58359"/>
        <dbReference type="ChEBI" id="CHEBI:456216"/>
        <dbReference type="EC" id="6.3.5.5"/>
    </reaction>
</comment>
<comment type="catalytic activity">
    <molecule>Carbamoyl phosphate synthase large chain</molecule>
    <reaction evidence="1">
        <text>hydrogencarbonate + NH4(+) + 2 ATP = carbamoyl phosphate + 2 ADP + phosphate + 2 H(+)</text>
        <dbReference type="Rhea" id="RHEA:18029"/>
        <dbReference type="ChEBI" id="CHEBI:15378"/>
        <dbReference type="ChEBI" id="CHEBI:17544"/>
        <dbReference type="ChEBI" id="CHEBI:28938"/>
        <dbReference type="ChEBI" id="CHEBI:30616"/>
        <dbReference type="ChEBI" id="CHEBI:43474"/>
        <dbReference type="ChEBI" id="CHEBI:58228"/>
        <dbReference type="ChEBI" id="CHEBI:456216"/>
        <dbReference type="EC" id="6.3.4.16"/>
    </reaction>
</comment>
<comment type="cofactor">
    <cofactor evidence="1">
        <name>Mg(2+)</name>
        <dbReference type="ChEBI" id="CHEBI:18420"/>
    </cofactor>
    <cofactor evidence="1">
        <name>Mn(2+)</name>
        <dbReference type="ChEBI" id="CHEBI:29035"/>
    </cofactor>
    <text evidence="1">Binds 4 Mg(2+) or Mn(2+) ions per subunit.</text>
</comment>
<comment type="pathway">
    <text evidence="1">Amino-acid biosynthesis; L-arginine biosynthesis; carbamoyl phosphate from bicarbonate: step 1/1.</text>
</comment>
<comment type="pathway">
    <text evidence="1">Pyrimidine metabolism; UMP biosynthesis via de novo pathway; (S)-dihydroorotate from bicarbonate: step 1/3.</text>
</comment>
<comment type="subunit">
    <text evidence="1">Composed of two chains; the small (or glutamine) chain promotes the hydrolysis of glutamine to ammonia, which is used by the large (or ammonia) chain to synthesize carbamoyl phosphate. Tetramer of heterodimers (alpha,beta)4.</text>
</comment>
<comment type="domain">
    <text evidence="1">The large subunit is composed of 2 ATP-grasp domains that are involved in binding the 2 ATP molecules needed for carbamoyl phosphate synthesis. The N-terminal ATP-grasp domain (referred to as the carboxyphosphate synthetic component) catalyzes the ATP-dependent phosphorylation of hydrogencarbonate to carboxyphosphate and the subsequent nucleophilic attack by ammonia to form a carbamate intermediate. The C-terminal ATP-grasp domain (referred to as the carbamoyl phosphate synthetic component) then catalyzes the phosphorylation of carbamate with the second ATP to form the end product carbamoyl phosphate. The reactive and unstable enzyme intermediates are sequentially channeled from one active site to the next through the interior of the protein over a distance of at least 96 A.</text>
</comment>
<comment type="similarity">
    <text evidence="1">Belongs to the CarB family.</text>
</comment>
<comment type="sequence caution" evidence="2">
    <conflict type="erroneous initiation">
        <sequence resource="EMBL-CDS" id="BAA10403"/>
    </conflict>
</comment>
<reference key="1">
    <citation type="journal article" date="1996" name="DNA Res.">
        <title>Sequence analysis of the genome of the unicellular cyanobacterium Synechocystis sp. strain PCC6803. II. Sequence determination of the entire genome and assignment of potential protein-coding regions.</title>
        <authorList>
            <person name="Kaneko T."/>
            <person name="Sato S."/>
            <person name="Kotani H."/>
            <person name="Tanaka A."/>
            <person name="Asamizu E."/>
            <person name="Nakamura Y."/>
            <person name="Miyajima N."/>
            <person name="Hirosawa M."/>
            <person name="Sugiura M."/>
            <person name="Sasamoto S."/>
            <person name="Kimura T."/>
            <person name="Hosouchi T."/>
            <person name="Matsuno A."/>
            <person name="Muraki A."/>
            <person name="Nakazaki N."/>
            <person name="Naruo K."/>
            <person name="Okumura S."/>
            <person name="Shimpo S."/>
            <person name="Takeuchi C."/>
            <person name="Wada T."/>
            <person name="Watanabe A."/>
            <person name="Yamada M."/>
            <person name="Yasuda M."/>
            <person name="Tabata S."/>
        </authorList>
    </citation>
    <scope>NUCLEOTIDE SEQUENCE [LARGE SCALE GENOMIC DNA]</scope>
    <source>
        <strain>ATCC 27184 / PCC 6803 / Kazusa</strain>
    </source>
</reference>
<accession>Q55756</accession>
<feature type="chain" id="PRO_0000145057" description="Carbamoyl phosphate synthase large chain">
    <location>
        <begin position="1"/>
        <end position="1081"/>
    </location>
</feature>
<feature type="domain" description="ATP-grasp 1" evidence="1">
    <location>
        <begin position="133"/>
        <end position="329"/>
    </location>
</feature>
<feature type="domain" description="ATP-grasp 2" evidence="1">
    <location>
        <begin position="686"/>
        <end position="878"/>
    </location>
</feature>
<feature type="domain" description="MGS-like" evidence="1">
    <location>
        <begin position="945"/>
        <end position="1081"/>
    </location>
</feature>
<feature type="region of interest" description="Carboxyphosphate synthetic domain" evidence="1">
    <location>
        <begin position="1"/>
        <end position="403"/>
    </location>
</feature>
<feature type="region of interest" description="Oligomerization domain" evidence="1">
    <location>
        <begin position="404"/>
        <end position="553"/>
    </location>
</feature>
<feature type="region of interest" description="Carbamoyl phosphate synthetic domain" evidence="1">
    <location>
        <begin position="554"/>
        <end position="944"/>
    </location>
</feature>
<feature type="region of interest" description="Allosteric domain" evidence="1">
    <location>
        <begin position="945"/>
        <end position="1081"/>
    </location>
</feature>
<feature type="binding site" evidence="1">
    <location>
        <position position="129"/>
    </location>
    <ligand>
        <name>ATP</name>
        <dbReference type="ChEBI" id="CHEBI:30616"/>
        <label>1</label>
    </ligand>
</feature>
<feature type="binding site" evidence="1">
    <location>
        <position position="170"/>
    </location>
    <ligand>
        <name>ATP</name>
        <dbReference type="ChEBI" id="CHEBI:30616"/>
        <label>1</label>
    </ligand>
</feature>
<feature type="binding site" evidence="1">
    <location>
        <position position="177"/>
    </location>
    <ligand>
        <name>ATP</name>
        <dbReference type="ChEBI" id="CHEBI:30616"/>
        <label>1</label>
    </ligand>
</feature>
<feature type="binding site" evidence="1">
    <location>
        <position position="209"/>
    </location>
    <ligand>
        <name>ATP</name>
        <dbReference type="ChEBI" id="CHEBI:30616"/>
        <label>1</label>
    </ligand>
</feature>
<feature type="binding site" evidence="1">
    <location>
        <position position="211"/>
    </location>
    <ligand>
        <name>ATP</name>
        <dbReference type="ChEBI" id="CHEBI:30616"/>
        <label>1</label>
    </ligand>
</feature>
<feature type="binding site" evidence="1">
    <location>
        <position position="216"/>
    </location>
    <ligand>
        <name>ATP</name>
        <dbReference type="ChEBI" id="CHEBI:30616"/>
        <label>1</label>
    </ligand>
</feature>
<feature type="binding site" evidence="1">
    <location>
        <position position="242"/>
    </location>
    <ligand>
        <name>ATP</name>
        <dbReference type="ChEBI" id="CHEBI:30616"/>
        <label>1</label>
    </ligand>
</feature>
<feature type="binding site" evidence="1">
    <location>
        <position position="243"/>
    </location>
    <ligand>
        <name>ATP</name>
        <dbReference type="ChEBI" id="CHEBI:30616"/>
        <label>1</label>
    </ligand>
</feature>
<feature type="binding site" evidence="1">
    <location>
        <position position="244"/>
    </location>
    <ligand>
        <name>ATP</name>
        <dbReference type="ChEBI" id="CHEBI:30616"/>
        <label>1</label>
    </ligand>
</feature>
<feature type="binding site" evidence="1">
    <location>
        <position position="286"/>
    </location>
    <ligand>
        <name>ATP</name>
        <dbReference type="ChEBI" id="CHEBI:30616"/>
        <label>1</label>
    </ligand>
</feature>
<feature type="binding site" evidence="1">
    <location>
        <position position="286"/>
    </location>
    <ligand>
        <name>Mg(2+)</name>
        <dbReference type="ChEBI" id="CHEBI:18420"/>
        <label>1</label>
    </ligand>
</feature>
<feature type="binding site" evidence="1">
    <location>
        <position position="286"/>
    </location>
    <ligand>
        <name>Mn(2+)</name>
        <dbReference type="ChEBI" id="CHEBI:29035"/>
        <label>1</label>
    </ligand>
</feature>
<feature type="binding site" evidence="1">
    <location>
        <position position="300"/>
    </location>
    <ligand>
        <name>ATP</name>
        <dbReference type="ChEBI" id="CHEBI:30616"/>
        <label>1</label>
    </ligand>
</feature>
<feature type="binding site" evidence="1">
    <location>
        <position position="300"/>
    </location>
    <ligand>
        <name>Mg(2+)</name>
        <dbReference type="ChEBI" id="CHEBI:18420"/>
        <label>1</label>
    </ligand>
</feature>
<feature type="binding site" evidence="1">
    <location>
        <position position="300"/>
    </location>
    <ligand>
        <name>Mg(2+)</name>
        <dbReference type="ChEBI" id="CHEBI:18420"/>
        <label>2</label>
    </ligand>
</feature>
<feature type="binding site" evidence="1">
    <location>
        <position position="300"/>
    </location>
    <ligand>
        <name>Mn(2+)</name>
        <dbReference type="ChEBI" id="CHEBI:29035"/>
        <label>1</label>
    </ligand>
</feature>
<feature type="binding site" evidence="1">
    <location>
        <position position="300"/>
    </location>
    <ligand>
        <name>Mn(2+)</name>
        <dbReference type="ChEBI" id="CHEBI:29035"/>
        <label>2</label>
    </ligand>
</feature>
<feature type="binding site" evidence="1">
    <location>
        <position position="302"/>
    </location>
    <ligand>
        <name>Mg(2+)</name>
        <dbReference type="ChEBI" id="CHEBI:18420"/>
        <label>2</label>
    </ligand>
</feature>
<feature type="binding site" evidence="1">
    <location>
        <position position="302"/>
    </location>
    <ligand>
        <name>Mn(2+)</name>
        <dbReference type="ChEBI" id="CHEBI:29035"/>
        <label>2</label>
    </ligand>
</feature>
<feature type="binding site" evidence="1">
    <location>
        <position position="722"/>
    </location>
    <ligand>
        <name>ATP</name>
        <dbReference type="ChEBI" id="CHEBI:30616"/>
        <label>2</label>
    </ligand>
</feature>
<feature type="binding site" evidence="1">
    <location>
        <position position="761"/>
    </location>
    <ligand>
        <name>ATP</name>
        <dbReference type="ChEBI" id="CHEBI:30616"/>
        <label>2</label>
    </ligand>
</feature>
<feature type="binding site" evidence="1">
    <location>
        <position position="763"/>
    </location>
    <ligand>
        <name>ATP</name>
        <dbReference type="ChEBI" id="CHEBI:30616"/>
        <label>2</label>
    </ligand>
</feature>
<feature type="binding site" evidence="1">
    <location>
        <position position="768"/>
    </location>
    <ligand>
        <name>ATP</name>
        <dbReference type="ChEBI" id="CHEBI:30616"/>
        <label>2</label>
    </ligand>
</feature>
<feature type="binding site" evidence="1">
    <location>
        <position position="794"/>
    </location>
    <ligand>
        <name>ATP</name>
        <dbReference type="ChEBI" id="CHEBI:30616"/>
        <label>2</label>
    </ligand>
</feature>
<feature type="binding site" evidence="1">
    <location>
        <position position="795"/>
    </location>
    <ligand>
        <name>ATP</name>
        <dbReference type="ChEBI" id="CHEBI:30616"/>
        <label>2</label>
    </ligand>
</feature>
<feature type="binding site" evidence="1">
    <location>
        <position position="796"/>
    </location>
    <ligand>
        <name>ATP</name>
        <dbReference type="ChEBI" id="CHEBI:30616"/>
        <label>2</label>
    </ligand>
</feature>
<feature type="binding site" evidence="1">
    <location>
        <position position="797"/>
    </location>
    <ligand>
        <name>ATP</name>
        <dbReference type="ChEBI" id="CHEBI:30616"/>
        <label>2</label>
    </ligand>
</feature>
<feature type="binding site" evidence="1">
    <location>
        <position position="837"/>
    </location>
    <ligand>
        <name>ATP</name>
        <dbReference type="ChEBI" id="CHEBI:30616"/>
        <label>2</label>
    </ligand>
</feature>
<feature type="binding site" evidence="1">
    <location>
        <position position="837"/>
    </location>
    <ligand>
        <name>Mg(2+)</name>
        <dbReference type="ChEBI" id="CHEBI:18420"/>
        <label>3</label>
    </ligand>
</feature>
<feature type="binding site" evidence="1">
    <location>
        <position position="837"/>
    </location>
    <ligand>
        <name>Mn(2+)</name>
        <dbReference type="ChEBI" id="CHEBI:29035"/>
        <label>3</label>
    </ligand>
</feature>
<feature type="binding site" evidence="1">
    <location>
        <position position="849"/>
    </location>
    <ligand>
        <name>ATP</name>
        <dbReference type="ChEBI" id="CHEBI:30616"/>
        <label>2</label>
    </ligand>
</feature>
<feature type="binding site" evidence="1">
    <location>
        <position position="849"/>
    </location>
    <ligand>
        <name>Mg(2+)</name>
        <dbReference type="ChEBI" id="CHEBI:18420"/>
        <label>3</label>
    </ligand>
</feature>
<feature type="binding site" evidence="1">
    <location>
        <position position="849"/>
    </location>
    <ligand>
        <name>Mg(2+)</name>
        <dbReference type="ChEBI" id="CHEBI:18420"/>
        <label>4</label>
    </ligand>
</feature>
<feature type="binding site" evidence="1">
    <location>
        <position position="849"/>
    </location>
    <ligand>
        <name>Mn(2+)</name>
        <dbReference type="ChEBI" id="CHEBI:29035"/>
        <label>3</label>
    </ligand>
</feature>
<feature type="binding site" evidence="1">
    <location>
        <position position="849"/>
    </location>
    <ligand>
        <name>Mn(2+)</name>
        <dbReference type="ChEBI" id="CHEBI:29035"/>
        <label>4</label>
    </ligand>
</feature>
<feature type="binding site" evidence="1">
    <location>
        <position position="851"/>
    </location>
    <ligand>
        <name>Mg(2+)</name>
        <dbReference type="ChEBI" id="CHEBI:18420"/>
        <label>4</label>
    </ligand>
</feature>
<feature type="binding site" evidence="1">
    <location>
        <position position="851"/>
    </location>
    <ligand>
        <name>Mn(2+)</name>
        <dbReference type="ChEBI" id="CHEBI:29035"/>
        <label>4</label>
    </ligand>
</feature>
<protein>
    <recommendedName>
        <fullName evidence="1">Carbamoyl phosphate synthase large chain</fullName>
        <ecNumber evidence="1">6.3.4.16</ecNumber>
        <ecNumber evidence="1">6.3.5.5</ecNumber>
    </recommendedName>
    <alternativeName>
        <fullName evidence="1">Carbamoyl phosphate synthetase ammonia chain</fullName>
    </alternativeName>
</protein>
<proteinExistence type="inferred from homology"/>
<sequence>MPRRNDLNKIMILGAGPIVIGQACEFDYSGTQACKALKEEGYEVVLVNSNPASIMTDPELADRTYIEPLIPEIVEKIIEKERPDAVLPTMGGQTALNLAVSLSKSGVLEKYGVELIGAKLPAIEMGEDRELFKEAMARIGVPVCPSGIASSIEEARQVAHEIGSYPLIIRPAFTLAGTGGGIAYNQEEYEEMVQYGLDQSPMSQILVEKSLLGWKEYELEVMRDLADNVVIICSIENFDPMGVHTGDSITVAPAQTLTDKEYQRLRDYSIAIIREIGVETGGSNIQFSVNPANGDVIVIEMNPRVSRSSALASKATGFPIAKFAAKLAVGYTLNEISNDITKKTPASFEPTIDYVVTKIPRFAFEKFPGAEPILNTQMKSVGEAMAIGRTFQESFQKALRSLETGRFGFGCDRHETLPTLSHLRSQLRTPNPERVFSLHHAFNLGMTVEEIHELTAIDPWFLDKLEDLVKTEKYMKQRSLKDLTAADLRYIKQQGFGDRQIAFATKTTEDEVRAYRKSLGITPVYKVVDTCAAEFEAFTPYYYSTYEPEECEVLPSDKPKVMILGGGPNRIGQGIEFDYCCCHAAFSLSDAGYETIMVNSNPETVSTDYDTSDRLYFEPLTKEDVLNIIEAENPVGIIIQFGGQTPLKLAVPLQKYLNSPDCPVQTKIWGTSPDSIDTAEDRERFEKILHELEISQPPNGIARDYEESRVVANRISYPVVVRPSYVLGGRAMEIVYSDEELERYMTYAVQIEPDHPILIDKFLENAIEVDVDSLTDSTGKVVIGSIMEHIEEAGIHSGDSACSIPYTSLSDNVLTTIRQWTEQLARALNVVGLMNIQYAVQGDQVYILEANPRASRTVPYVSKATGRPLAKIASLVMSGKTLEELGVTEEFIPQHVAVKEAVLPFSKFPGADTLLGPEMRSTGEVMGIDSDFGKAFAKAELGAGVILATTGTVFVSMSDRTKEAAVPVVRELIDLGFKVVATSGTQKVLREHGIEGVEVVLKLHEGRPHVIDWIKNGQIQFIINTPSGEESQLDGRTIRRAALDYKLPIITTIAGGKATVAALRSLQDHPLDVKALQDYLG</sequence>
<name>CARB_SYNY3</name>
<keyword id="KW-0028">Amino-acid biosynthesis</keyword>
<keyword id="KW-0055">Arginine biosynthesis</keyword>
<keyword id="KW-0067">ATP-binding</keyword>
<keyword id="KW-0436">Ligase</keyword>
<keyword id="KW-0460">Magnesium</keyword>
<keyword id="KW-0464">Manganese</keyword>
<keyword id="KW-0479">Metal-binding</keyword>
<keyword id="KW-0547">Nucleotide-binding</keyword>
<keyword id="KW-0665">Pyrimidine biosynthesis</keyword>
<keyword id="KW-1185">Reference proteome</keyword>
<keyword id="KW-0677">Repeat</keyword>